<protein>
    <recommendedName>
        <fullName evidence="1">PEP-dependent dihydroxyacetone kinase, phosphoryl donor subunit DhaM</fullName>
        <ecNumber evidence="1">2.7.1.121</ecNumber>
    </recommendedName>
    <alternativeName>
        <fullName evidence="1">Dihydroxyacetone kinase subunit M</fullName>
    </alternativeName>
</protein>
<organism>
    <name type="scientific">Klebsiella michiganensis (strain ATCC 8724 / DSM 4798 / JCM 20051 / NBRC 3318 / NRRL B-199 / KCTC 1686 / BUCSAV 143 / CCM 1901)</name>
    <dbReference type="NCBI Taxonomy" id="1006551"/>
    <lineage>
        <taxon>Bacteria</taxon>
        <taxon>Pseudomonadati</taxon>
        <taxon>Pseudomonadota</taxon>
        <taxon>Gammaproteobacteria</taxon>
        <taxon>Enterobacterales</taxon>
        <taxon>Enterobacteriaceae</taxon>
        <taxon>Klebsiella/Raoultella group</taxon>
        <taxon>Klebsiella</taxon>
    </lineage>
</organism>
<evidence type="ECO:0000250" key="1">
    <source>
        <dbReference type="UniProtKB" id="P37349"/>
    </source>
</evidence>
<evidence type="ECO:0000255" key="2">
    <source>
        <dbReference type="PROSITE-ProRule" id="PRU00419"/>
    </source>
</evidence>
<evidence type="ECO:0000255" key="3">
    <source>
        <dbReference type="PROSITE-ProRule" id="PRU00681"/>
    </source>
</evidence>
<evidence type="ECO:0000269" key="4">
    <source>
    </source>
</evidence>
<evidence type="ECO:0000269" key="5">
    <source>
    </source>
</evidence>
<evidence type="ECO:0000305" key="6"/>
<evidence type="ECO:0000312" key="7">
    <source>
        <dbReference type="EMBL" id="AEX02377.1"/>
    </source>
</evidence>
<gene>
    <name evidence="1" type="primary">dhaM</name>
    <name evidence="7" type="ordered locus">KOX_03180</name>
</gene>
<feature type="chain" id="PRO_0000435889" description="PEP-dependent dihydroxyacetone kinase, phosphoryl donor subunit DhaM">
    <location>
        <begin position="1"/>
        <end position="472"/>
    </location>
</feature>
<feature type="domain" description="PTS EIIA type-4" evidence="2">
    <location>
        <begin position="1"/>
        <end position="135"/>
    </location>
</feature>
<feature type="domain" description="HPr" evidence="3">
    <location>
        <begin position="156"/>
        <end position="243"/>
    </location>
</feature>
<feature type="region of interest" description="PTS EI-like, N-terminal part" evidence="1">
    <location>
        <begin position="266"/>
        <end position="472"/>
    </location>
</feature>
<feature type="active site" description="Tele-phosphohistidine intermediate" evidence="2">
    <location>
        <position position="9"/>
    </location>
</feature>
<feature type="active site" description="Pros-phosphohistidine intermediate" evidence="3">
    <location>
        <position position="170"/>
    </location>
</feature>
<feature type="active site" description="Tele-phosphohistidine intermediate" evidence="1">
    <location>
        <position position="432"/>
    </location>
</feature>
<name>DHAM_KLEM8</name>
<accession>A0A0H3H456</accession>
<reference key="1">
    <citation type="journal article" date="2012" name="J. Bacteriol.">
        <title>Complete genome sequence of Klebsiella oxytoca KCTC 1686, used in production of 2,3-butanediol.</title>
        <authorList>
            <person name="Shin S.H."/>
            <person name="Kim S."/>
            <person name="Kim J.Y."/>
            <person name="Lee S."/>
            <person name="Um Y."/>
            <person name="Oh M.K."/>
            <person name="Kim Y.R."/>
            <person name="Lee J."/>
            <person name="Yang K.S."/>
        </authorList>
    </citation>
    <scope>NUCLEOTIDE SEQUENCE [LARGE SCALE GENOMIC DNA]</scope>
    <source>
        <strain>ATCC 8724 / DSM 4798 / JCM 20051 / NBRC 3318 / NRRL B-199 / KCTC 1686 / BUCSAV 143 / CCM 1901</strain>
    </source>
</reference>
<reference key="2">
    <citation type="journal article" date="2015" name="Elife">
        <title>YcgC represents a new protein deacetylase family in prokaryotes.</title>
        <authorList>
            <person name="Tu S."/>
            <person name="Guo S.J."/>
            <person name="Chen C.S."/>
            <person name="Liu C.X."/>
            <person name="Jiang H.W."/>
            <person name="Ge F."/>
            <person name="Deng J.Y."/>
            <person name="Zhou Y.M."/>
            <person name="Czajkowsky D.M."/>
            <person name="Li Y."/>
            <person name="Qi B.R."/>
            <person name="Ahn Y.H."/>
            <person name="Cole P.A."/>
            <person name="Zhu H."/>
            <person name="Tao S.C."/>
        </authorList>
    </citation>
    <scope>PROTEIN-LYSINE DEACETYLASE ACTIVITY</scope>
    <scope>CAUTION</scope>
    <source>
        <strain>ATCC 8724 / DSM 4798 / JCM 20051 / NBRC 3318 / NRRL B-199 / KCTC 1686 / BUCSAV 143 / CCM 1901</strain>
    </source>
</reference>
<reference key="3">
    <citation type="journal article" date="2018" name="Elife">
        <title>Comment on 'YcgC represents a new protein deacetylase family in prokaryotes'.</title>
        <authorList>
            <person name="Kremer M."/>
            <person name="Kuhlmann N."/>
            <person name="Lechner M."/>
            <person name="Baldus L."/>
            <person name="Lammers M."/>
        </authorList>
    </citation>
    <scope>NO PROTEIN-LYSINE DEACETYLASE ACTIVITY IN E.COLI ORTHOLOG</scope>
    <scope>CAUTION</scope>
</reference>
<keyword id="KW-0808">Transferase</keyword>
<proteinExistence type="inferred from homology"/>
<dbReference type="EC" id="2.7.1.121" evidence="1"/>
<dbReference type="EMBL" id="CP003218">
    <property type="protein sequence ID" value="AEX02377.1"/>
    <property type="molecule type" value="Genomic_DNA"/>
</dbReference>
<dbReference type="RefSeq" id="WP_014226903.1">
    <property type="nucleotide sequence ID" value="NC_016612.1"/>
</dbReference>
<dbReference type="SMR" id="A0A0H3H456"/>
<dbReference type="KEGG" id="kox:KOX_03180"/>
<dbReference type="PATRIC" id="fig|1006551.4.peg.636"/>
<dbReference type="HOGENOM" id="CLU_045361_0_0_6"/>
<dbReference type="Proteomes" id="UP000007843">
    <property type="component" value="Chromosome"/>
</dbReference>
<dbReference type="GO" id="GO:0016020">
    <property type="term" value="C:membrane"/>
    <property type="evidence" value="ECO:0007669"/>
    <property type="project" value="InterPro"/>
</dbReference>
<dbReference type="GO" id="GO:0047324">
    <property type="term" value="F:phosphoenolpyruvate-glycerone phosphotransferase activity"/>
    <property type="evidence" value="ECO:0007669"/>
    <property type="project" value="UniProtKB-EC"/>
</dbReference>
<dbReference type="GO" id="GO:0019563">
    <property type="term" value="P:glycerol catabolic process"/>
    <property type="evidence" value="ECO:0007669"/>
    <property type="project" value="InterPro"/>
</dbReference>
<dbReference type="GO" id="GO:0009401">
    <property type="term" value="P:phosphoenolpyruvate-dependent sugar phosphotransferase system"/>
    <property type="evidence" value="ECO:0007669"/>
    <property type="project" value="InterPro"/>
</dbReference>
<dbReference type="CDD" id="cd00367">
    <property type="entry name" value="PTS-HPr_like"/>
    <property type="match status" value="1"/>
</dbReference>
<dbReference type="Gene3D" id="3.30.1340.10">
    <property type="entry name" value="HPr-like"/>
    <property type="match status" value="1"/>
</dbReference>
<dbReference type="Gene3D" id="3.50.30.10">
    <property type="entry name" value="Phosphohistidine domain"/>
    <property type="match status" value="1"/>
</dbReference>
<dbReference type="Gene3D" id="3.40.50.510">
    <property type="entry name" value="Phosphotransferase system, mannose-type IIA component"/>
    <property type="match status" value="1"/>
</dbReference>
<dbReference type="Gene3D" id="1.10.274.10">
    <property type="entry name" value="PtsI, HPr-binding domain"/>
    <property type="match status" value="1"/>
</dbReference>
<dbReference type="InterPro" id="IPR039643">
    <property type="entry name" value="DhaM"/>
</dbReference>
<dbReference type="InterPro" id="IPR012844">
    <property type="entry name" value="DhaM_N"/>
</dbReference>
<dbReference type="InterPro" id="IPR000032">
    <property type="entry name" value="HPr-like"/>
</dbReference>
<dbReference type="InterPro" id="IPR035895">
    <property type="entry name" value="HPr-like_sf"/>
</dbReference>
<dbReference type="InterPro" id="IPR008279">
    <property type="entry name" value="PEP-util_enz_mobile_dom"/>
</dbReference>
<dbReference type="InterPro" id="IPR036637">
    <property type="entry name" value="Phosphohistidine_dom_sf"/>
</dbReference>
<dbReference type="InterPro" id="IPR004701">
    <property type="entry name" value="PTS_EIIA_man-typ"/>
</dbReference>
<dbReference type="InterPro" id="IPR036662">
    <property type="entry name" value="PTS_EIIA_man-typ_sf"/>
</dbReference>
<dbReference type="InterPro" id="IPR008731">
    <property type="entry name" value="PTS_EIN"/>
</dbReference>
<dbReference type="InterPro" id="IPR001020">
    <property type="entry name" value="PTS_HPr_His_P_site"/>
</dbReference>
<dbReference type="InterPro" id="IPR036618">
    <property type="entry name" value="PtsI_HPr-bd_sf"/>
</dbReference>
<dbReference type="NCBIfam" id="TIGR02364">
    <property type="entry name" value="dha_pts"/>
    <property type="match status" value="1"/>
</dbReference>
<dbReference type="NCBIfam" id="NF008478">
    <property type="entry name" value="PRK11377.1"/>
    <property type="match status" value="1"/>
</dbReference>
<dbReference type="NCBIfam" id="TIGR01003">
    <property type="entry name" value="PTS_HPr_family"/>
    <property type="match status" value="1"/>
</dbReference>
<dbReference type="PANTHER" id="PTHR38594">
    <property type="entry name" value="PEP-DEPENDENT DIHYDROXYACETONE KINASE, PHOSPHORYL DONOR SUBUNIT DHAM"/>
    <property type="match status" value="1"/>
</dbReference>
<dbReference type="PANTHER" id="PTHR38594:SF1">
    <property type="entry name" value="PEP-DEPENDENT DIHYDROXYACETONE KINASE, PHOSPHORYL DONOR SUBUNIT DHAM"/>
    <property type="match status" value="1"/>
</dbReference>
<dbReference type="Pfam" id="PF03610">
    <property type="entry name" value="EIIA-man"/>
    <property type="match status" value="1"/>
</dbReference>
<dbReference type="Pfam" id="PF05524">
    <property type="entry name" value="PEP-utilisers_N"/>
    <property type="match status" value="1"/>
</dbReference>
<dbReference type="Pfam" id="PF00391">
    <property type="entry name" value="PEP-utilizers"/>
    <property type="match status" value="1"/>
</dbReference>
<dbReference type="Pfam" id="PF00381">
    <property type="entry name" value="PTS-HPr"/>
    <property type="match status" value="1"/>
</dbReference>
<dbReference type="PRINTS" id="PR00107">
    <property type="entry name" value="PHOSPHOCPHPR"/>
</dbReference>
<dbReference type="SUPFAM" id="SSF47831">
    <property type="entry name" value="Enzyme I of the PEP:sugar phosphotransferase system HPr-binding (sub)domain"/>
    <property type="match status" value="1"/>
</dbReference>
<dbReference type="SUPFAM" id="SSF55594">
    <property type="entry name" value="HPr-like"/>
    <property type="match status" value="1"/>
</dbReference>
<dbReference type="SUPFAM" id="SSF52009">
    <property type="entry name" value="Phosphohistidine domain"/>
    <property type="match status" value="1"/>
</dbReference>
<dbReference type="SUPFAM" id="SSF53062">
    <property type="entry name" value="PTS system fructose IIA component-like"/>
    <property type="match status" value="1"/>
</dbReference>
<dbReference type="PROSITE" id="PS51096">
    <property type="entry name" value="PTS_EIIA_TYPE_4"/>
    <property type="match status" value="1"/>
</dbReference>
<dbReference type="PROSITE" id="PS51350">
    <property type="entry name" value="PTS_HPR_DOM"/>
    <property type="match status" value="1"/>
</dbReference>
<dbReference type="PROSITE" id="PS00369">
    <property type="entry name" value="PTS_HPR_HIS"/>
    <property type="match status" value="1"/>
</dbReference>
<comment type="function">
    <text evidence="1">Component of the dihydroxyacetone kinase complex, which is responsible for the phosphoenolpyruvate (PEP)-dependent phosphorylation of dihydroxyacetone. DhaM serves as the phosphoryl donor. Is phosphorylated by phosphoenolpyruvate in an EI- and HPr-dependent reaction, and a phosphorelay system on histidine residues finally leads to phosphoryl transfer to DhaL and dihydroxyacetone.</text>
</comment>
<comment type="catalytic activity">
    <reaction evidence="1">
        <text>dihydroxyacetone + phosphoenolpyruvate = dihydroxyacetone phosphate + pyruvate</text>
        <dbReference type="Rhea" id="RHEA:18381"/>
        <dbReference type="ChEBI" id="CHEBI:15361"/>
        <dbReference type="ChEBI" id="CHEBI:16016"/>
        <dbReference type="ChEBI" id="CHEBI:57642"/>
        <dbReference type="ChEBI" id="CHEBI:58702"/>
        <dbReference type="EC" id="2.7.1.121"/>
    </reaction>
</comment>
<comment type="subunit">
    <text evidence="1">Homodimer. The dihydroxyacetone kinase complex is composed of a homodimer of DhaM, a homodimer of DhaK and the subunit DhaL.</text>
</comment>
<comment type="domain">
    <text evidence="1">Consists of three domains. The N-terminal dimerization domain has the same fold as the IIA domain of the mannose transporter of the bacterial phosphoenolpyruvate:sugar phosphotransferase system (PTS). The middle domain is similar to HPr and the C-terminus is similar to the N-terminal domain of enzyme I (EI) of the PTS. The IIA domain of DhaM (via phospho-His-9), instead of ATP, is the phosphoryl donor to dihydroxyacetone (Dha). The phosphoryl flow likely involves HPr ('His-15') -&gt; DhaM (His-432 -&gt; His-170 -&gt; His-9) -&gt; DhaL-ADP -&gt; Dha. The HPr-like domain of DhaM cannot efficiently substitute for the general carrier protein HPr.</text>
</comment>
<comment type="miscellaneous">
    <text evidence="1">Unlike the carbohydrate-specific transporters of the PTS, the complex DhaKLM has no transport activity.</text>
</comment>
<comment type="similarity">
    <text evidence="6">Belongs to the PEP-utilizing enzyme family.</text>
</comment>
<comment type="caution">
    <text evidence="4 5">Was reported to be a protein deacetylase that removes acetyl groups on specific lysine residues in target proteins (PubMed:26716769). However, later experiments demonstrate that the protein ortholog in E.coli does not have any protein deacetylase activity; the discrepancy observed seems to be due to contaminants having proteolytic activity (PubMed:29939131).</text>
</comment>
<sequence length="472" mass="50197">MVNLVIVSHSARLGEGVGELARQMLMNDGCKLAIAAGIDDPASPIGTDPIKVMEAIESVADADHILVMMDIGSALLSAETALDLLDPAIAAKVRLCAAPLVEGTLAATVSAAAGAGIDKVIEDAMNALEAKRVQLGLPSQPQHASLTAAPVDDRDARSVSVVIQNHNGLHVRPASKLVAALAGFNADLVLEKGGKCVTPDSLNQIALLQVRRNDTLRLLARGPDADAALAAFQALAAENFGEPTEAAPARRPASADRVEGKVVLYPQPQDRISRETSAAIGQQQLRLKRAIDRTLEDLSALTTLAEATFSADIAAIFSGHHTLLDDPDLYAAACDIIRDEQCSAAWAWQQVLSDLSQQYRHLDDAYLQARYIDIEDILHRTLRHLNERNEALPQFSAPSILVADDIFPSTVLQLNAEQVKGICLQAGSELSHGAIIARQAGIAMLCQQSDALTLQDGENVILDIPGKRVIRG</sequence>